<gene>
    <name evidence="1" type="primary">pdxK</name>
    <name type="ordered locus">ECIAI39_2564</name>
</gene>
<proteinExistence type="inferred from homology"/>
<protein>
    <recommendedName>
        <fullName evidence="1">Pyridoxine/pyridoxal/pyridoxamine kinase</fullName>
        <shortName evidence="1">PN/PL/PM kinase</shortName>
        <ecNumber evidence="1">2.7.1.35</ecNumber>
    </recommendedName>
    <alternativeName>
        <fullName evidence="1">B6-vitamer kinase</fullName>
    </alternativeName>
</protein>
<evidence type="ECO:0000255" key="1">
    <source>
        <dbReference type="HAMAP-Rule" id="MF_01638"/>
    </source>
</evidence>
<feature type="chain" id="PRO_1000186802" description="Pyridoxine/pyridoxal/pyridoxamine kinase">
    <location>
        <begin position="1"/>
        <end position="283"/>
    </location>
</feature>
<feature type="binding site" evidence="1">
    <location>
        <position position="23"/>
    </location>
    <ligand>
        <name>substrate</name>
    </ligand>
</feature>
<feature type="binding site" evidence="1">
    <location>
        <position position="59"/>
    </location>
    <ligand>
        <name>substrate</name>
    </ligand>
</feature>
<feature type="binding site" evidence="1">
    <location>
        <position position="125"/>
    </location>
    <ligand>
        <name>ATP</name>
        <dbReference type="ChEBI" id="CHEBI:30616"/>
    </ligand>
</feature>
<feature type="binding site" evidence="1">
    <location>
        <position position="136"/>
    </location>
    <ligand>
        <name>Mg(2+)</name>
        <dbReference type="ChEBI" id="CHEBI:18420"/>
    </ligand>
</feature>
<feature type="binding site" evidence="1">
    <location>
        <position position="157"/>
    </location>
    <ligand>
        <name>ATP</name>
        <dbReference type="ChEBI" id="CHEBI:30616"/>
    </ligand>
</feature>
<feature type="binding site" evidence="1">
    <location>
        <position position="162"/>
    </location>
    <ligand>
        <name>ATP</name>
        <dbReference type="ChEBI" id="CHEBI:30616"/>
    </ligand>
</feature>
<feature type="binding site" evidence="1">
    <location>
        <position position="162"/>
    </location>
    <ligand>
        <name>Mg(2+)</name>
        <dbReference type="ChEBI" id="CHEBI:18420"/>
    </ligand>
</feature>
<feature type="binding site" evidence="1">
    <location>
        <position position="195"/>
    </location>
    <ligand>
        <name>ATP</name>
        <dbReference type="ChEBI" id="CHEBI:30616"/>
    </ligand>
</feature>
<feature type="binding site" evidence="1">
    <location>
        <begin position="221"/>
        <end position="224"/>
    </location>
    <ligand>
        <name>ATP</name>
        <dbReference type="ChEBI" id="CHEBI:30616"/>
    </ligand>
</feature>
<feature type="binding site" evidence="1">
    <location>
        <position position="231"/>
    </location>
    <ligand>
        <name>ATP</name>
        <dbReference type="ChEBI" id="CHEBI:30616"/>
    </ligand>
</feature>
<feature type="binding site" evidence="1">
    <location>
        <position position="233"/>
    </location>
    <ligand>
        <name>substrate</name>
    </ligand>
</feature>
<dbReference type="EC" id="2.7.1.35" evidence="1"/>
<dbReference type="EMBL" id="CU928164">
    <property type="protein sequence ID" value="CAR18688.1"/>
    <property type="molecule type" value="Genomic_DNA"/>
</dbReference>
<dbReference type="RefSeq" id="WP_000096666.1">
    <property type="nucleotide sequence ID" value="NC_011750.1"/>
</dbReference>
<dbReference type="RefSeq" id="YP_002408514.1">
    <property type="nucleotide sequence ID" value="NC_011750.1"/>
</dbReference>
<dbReference type="SMR" id="B7NPV5"/>
<dbReference type="STRING" id="585057.ECIAI39_2564"/>
<dbReference type="KEGG" id="ect:ECIAI39_2564"/>
<dbReference type="PATRIC" id="fig|585057.6.peg.2670"/>
<dbReference type="HOGENOM" id="CLU_046496_3_1_6"/>
<dbReference type="UniPathway" id="UPA01068">
    <property type="reaction ID" value="UER00298"/>
</dbReference>
<dbReference type="UniPathway" id="UPA01068">
    <property type="reaction ID" value="UER00299"/>
</dbReference>
<dbReference type="UniPathway" id="UPA01068">
    <property type="reaction ID" value="UER00300"/>
</dbReference>
<dbReference type="Proteomes" id="UP000000749">
    <property type="component" value="Chromosome"/>
</dbReference>
<dbReference type="GO" id="GO:0005829">
    <property type="term" value="C:cytosol"/>
    <property type="evidence" value="ECO:0007669"/>
    <property type="project" value="TreeGrafter"/>
</dbReference>
<dbReference type="GO" id="GO:0005524">
    <property type="term" value="F:ATP binding"/>
    <property type="evidence" value="ECO:0007669"/>
    <property type="project" value="UniProtKB-UniRule"/>
</dbReference>
<dbReference type="GO" id="GO:0008902">
    <property type="term" value="F:hydroxymethylpyrimidine kinase activity"/>
    <property type="evidence" value="ECO:0007669"/>
    <property type="project" value="TreeGrafter"/>
</dbReference>
<dbReference type="GO" id="GO:0000287">
    <property type="term" value="F:magnesium ion binding"/>
    <property type="evidence" value="ECO:0007669"/>
    <property type="project" value="UniProtKB-UniRule"/>
</dbReference>
<dbReference type="GO" id="GO:0008478">
    <property type="term" value="F:pyridoxal kinase activity"/>
    <property type="evidence" value="ECO:0007669"/>
    <property type="project" value="UniProtKB-UniRule"/>
</dbReference>
<dbReference type="GO" id="GO:0008270">
    <property type="term" value="F:zinc ion binding"/>
    <property type="evidence" value="ECO:0007669"/>
    <property type="project" value="UniProtKB-UniRule"/>
</dbReference>
<dbReference type="GO" id="GO:0009443">
    <property type="term" value="P:pyridoxal 5'-phosphate salvage"/>
    <property type="evidence" value="ECO:0007669"/>
    <property type="project" value="UniProtKB-UniRule"/>
</dbReference>
<dbReference type="CDD" id="cd01173">
    <property type="entry name" value="pyridoxal_pyridoxamine_kinase"/>
    <property type="match status" value="1"/>
</dbReference>
<dbReference type="FunFam" id="3.40.1190.20:FF:000009">
    <property type="entry name" value="Pyridoxine/pyridoxal/pyridoxamine kinase"/>
    <property type="match status" value="1"/>
</dbReference>
<dbReference type="Gene3D" id="3.40.1190.20">
    <property type="match status" value="1"/>
</dbReference>
<dbReference type="HAMAP" id="MF_01638">
    <property type="entry name" value="PdxK"/>
    <property type="match status" value="1"/>
</dbReference>
<dbReference type="InterPro" id="IPR023479">
    <property type="entry name" value="PdxK"/>
</dbReference>
<dbReference type="InterPro" id="IPR013749">
    <property type="entry name" value="PM/HMP-P_kinase-1"/>
</dbReference>
<dbReference type="InterPro" id="IPR004625">
    <property type="entry name" value="PyrdxlKinase"/>
</dbReference>
<dbReference type="InterPro" id="IPR029056">
    <property type="entry name" value="Ribokinase-like"/>
</dbReference>
<dbReference type="NCBIfam" id="NF006034">
    <property type="entry name" value="PRK08176.1"/>
    <property type="match status" value="1"/>
</dbReference>
<dbReference type="NCBIfam" id="TIGR00687">
    <property type="entry name" value="pyridox_kin"/>
    <property type="match status" value="1"/>
</dbReference>
<dbReference type="PANTHER" id="PTHR10534">
    <property type="entry name" value="PYRIDOXAL KINASE"/>
    <property type="match status" value="1"/>
</dbReference>
<dbReference type="PANTHER" id="PTHR10534:SF15">
    <property type="entry name" value="PYRIDOXINE_PYRIDOXAL_PYRIDOXAMINE KINASE"/>
    <property type="match status" value="1"/>
</dbReference>
<dbReference type="Pfam" id="PF08543">
    <property type="entry name" value="Phos_pyr_kin"/>
    <property type="match status" value="1"/>
</dbReference>
<dbReference type="SUPFAM" id="SSF53613">
    <property type="entry name" value="Ribokinase-like"/>
    <property type="match status" value="1"/>
</dbReference>
<accession>B7NPV5</accession>
<comment type="function">
    <text evidence="1">B6-vitamer kinase involved in the salvage pathway of pyridoxal 5'-phosphate (PLP). Catalyzes the phosphorylation of pyridoxine (PN), pyridoxal (PL), and pyridoxamine (PM), forming their respective 5'-phosphorylated esters, i.e. PNP, PLP and PMP.</text>
</comment>
<comment type="catalytic activity">
    <reaction evidence="1">
        <text>pyridoxal + ATP = pyridoxal 5'-phosphate + ADP + H(+)</text>
        <dbReference type="Rhea" id="RHEA:10224"/>
        <dbReference type="ChEBI" id="CHEBI:15378"/>
        <dbReference type="ChEBI" id="CHEBI:17310"/>
        <dbReference type="ChEBI" id="CHEBI:30616"/>
        <dbReference type="ChEBI" id="CHEBI:456216"/>
        <dbReference type="ChEBI" id="CHEBI:597326"/>
        <dbReference type="EC" id="2.7.1.35"/>
    </reaction>
</comment>
<comment type="catalytic activity">
    <reaction evidence="1">
        <text>pyridoxine + ATP = pyridoxine 5'-phosphate + ADP + H(+)</text>
        <dbReference type="Rhea" id="RHEA:25108"/>
        <dbReference type="ChEBI" id="CHEBI:15378"/>
        <dbReference type="ChEBI" id="CHEBI:16709"/>
        <dbReference type="ChEBI" id="CHEBI:30616"/>
        <dbReference type="ChEBI" id="CHEBI:58589"/>
        <dbReference type="ChEBI" id="CHEBI:456216"/>
        <dbReference type="EC" id="2.7.1.35"/>
    </reaction>
</comment>
<comment type="catalytic activity">
    <reaction evidence="1">
        <text>pyridoxamine + ATP = pyridoxamine 5'-phosphate + ADP + H(+)</text>
        <dbReference type="Rhea" id="RHEA:25104"/>
        <dbReference type="ChEBI" id="CHEBI:15378"/>
        <dbReference type="ChEBI" id="CHEBI:30616"/>
        <dbReference type="ChEBI" id="CHEBI:57761"/>
        <dbReference type="ChEBI" id="CHEBI:58451"/>
        <dbReference type="ChEBI" id="CHEBI:456216"/>
        <dbReference type="EC" id="2.7.1.35"/>
    </reaction>
</comment>
<comment type="cofactor">
    <cofactor evidence="1">
        <name>Mg(2+)</name>
        <dbReference type="ChEBI" id="CHEBI:18420"/>
    </cofactor>
</comment>
<comment type="pathway">
    <text evidence="1">Cofactor metabolism; pyridoxal 5'-phosphate salvage; pyridoxal 5'-phosphate from pyridoxal: step 1/1.</text>
</comment>
<comment type="pathway">
    <text evidence="1">Cofactor metabolism; pyridoxal 5'-phosphate salvage; pyridoxine 5'-phosphate from pyridoxine: step 1/1.</text>
</comment>
<comment type="pathway">
    <text evidence="1">Cofactor metabolism; pyridoxal 5'-phosphate salvage; pyridoxamine 5'-phosphate from pyridoxamine: step 1/1.</text>
</comment>
<comment type="subunit">
    <text evidence="1">Homodimer.</text>
</comment>
<comment type="similarity">
    <text evidence="1">Belongs to the pyridoxine kinase family. PdxK subfamily.</text>
</comment>
<keyword id="KW-0067">ATP-binding</keyword>
<keyword id="KW-0418">Kinase</keyword>
<keyword id="KW-0460">Magnesium</keyword>
<keyword id="KW-0479">Metal-binding</keyword>
<keyword id="KW-0547">Nucleotide-binding</keyword>
<keyword id="KW-0808">Transferase</keyword>
<keyword id="KW-0862">Zinc</keyword>
<reference key="1">
    <citation type="journal article" date="2009" name="PLoS Genet.">
        <title>Organised genome dynamics in the Escherichia coli species results in highly diverse adaptive paths.</title>
        <authorList>
            <person name="Touchon M."/>
            <person name="Hoede C."/>
            <person name="Tenaillon O."/>
            <person name="Barbe V."/>
            <person name="Baeriswyl S."/>
            <person name="Bidet P."/>
            <person name="Bingen E."/>
            <person name="Bonacorsi S."/>
            <person name="Bouchier C."/>
            <person name="Bouvet O."/>
            <person name="Calteau A."/>
            <person name="Chiapello H."/>
            <person name="Clermont O."/>
            <person name="Cruveiller S."/>
            <person name="Danchin A."/>
            <person name="Diard M."/>
            <person name="Dossat C."/>
            <person name="Karoui M.E."/>
            <person name="Frapy E."/>
            <person name="Garry L."/>
            <person name="Ghigo J.M."/>
            <person name="Gilles A.M."/>
            <person name="Johnson J."/>
            <person name="Le Bouguenec C."/>
            <person name="Lescat M."/>
            <person name="Mangenot S."/>
            <person name="Martinez-Jehanne V."/>
            <person name="Matic I."/>
            <person name="Nassif X."/>
            <person name="Oztas S."/>
            <person name="Petit M.A."/>
            <person name="Pichon C."/>
            <person name="Rouy Z."/>
            <person name="Ruf C.S."/>
            <person name="Schneider D."/>
            <person name="Tourret J."/>
            <person name="Vacherie B."/>
            <person name="Vallenet D."/>
            <person name="Medigue C."/>
            <person name="Rocha E.P.C."/>
            <person name="Denamur E."/>
        </authorList>
    </citation>
    <scope>NUCLEOTIDE SEQUENCE [LARGE SCALE GENOMIC DNA]</scope>
    <source>
        <strain>IAI39 / ExPEC</strain>
    </source>
</reference>
<organism>
    <name type="scientific">Escherichia coli O7:K1 (strain IAI39 / ExPEC)</name>
    <dbReference type="NCBI Taxonomy" id="585057"/>
    <lineage>
        <taxon>Bacteria</taxon>
        <taxon>Pseudomonadati</taxon>
        <taxon>Pseudomonadota</taxon>
        <taxon>Gammaproteobacteria</taxon>
        <taxon>Enterobacterales</taxon>
        <taxon>Enterobacteriaceae</taxon>
        <taxon>Escherichia</taxon>
    </lineage>
</organism>
<name>PDXK_ECO7I</name>
<sequence>MSSLLLFNDKSRALQADIVAVQSQVVYGSVGNSIAVPAIKQNGLNVFAVPTVLLSNTPHYDTFYGGAIPDEWFSGYLRALQERDALRQLRAVTTGYMGTASQIKILAEWLTALRKDHPDLLIMVDPVIGDIDSGIYVKPDLPEAYRQYLLPLAQGITPNIFELEILTGKNCRDLDSAIAAAKSLLSDTLKWVVITSASGNEENQEMQVVVVSADSVNVISHSRVKTDLKGTGDLFCAQLISGLLKGKELTNAVHSAGLRVLEVMRYTQQHESDELILPPLAEA</sequence>